<accession>Q20NV1</accession>
<protein>
    <recommendedName>
        <fullName evidence="1">Polymerase basic protein 2</fullName>
    </recommendedName>
    <alternativeName>
        <fullName evidence="1">RNA-directed RNA polymerase subunit P3</fullName>
    </alternativeName>
</protein>
<sequence>MERIKELRDLMSQSRTREILTKTTVDHMAIIKKYTSGRQEKNPALRMKWMMAMKYPITADKRIMEMIPERNEQGQTLWSKTNDAGSDRVMVSPLAVTWWNRNGPTTSTAHYPKVYKTYFEKVERLKHGTFGPVHFRNQVKIRRRVDINPGHADLSAKEAQDVIMEVVFPNEVGARILTSESQLTITKEKKEELQNCKIAPLMVAYMLERELVRKTRFLPVAGGTSSVYIEVLHLTQGTCWEQMYTPGGEVRNDDVDQSLIIAARNIVRRATVSADPLASLLEMCHSTQIGGIRMVDILRQNPTEEQAVDICKAAMGLRISSSFSFGGFTFKRTSGSSIKREEEVLTGNLQTLKIRVHEGYEEFTMVGRRATAILRKATRRLIQLIVSGRDEQSIAEAIIVAMVFSQEDCMIKAVRGDLNFVNRANQRLNPMHQLLRHFQKDAKVLFQNWGIEPIDNVMGMIGILPDMTPNTEMSLRGIRISKMGVDEYSSTERVVVSIDRFLRVRDQRGNVLLSPEEVSETQGTEKLTITYSSSMMWEINGPESVLVNTYQWIIRNWEMIKIQWSQEPTMLYNKMEFEPFQSLVPKAARGQYSGFVRTLFQQMRDVLGTFDTVQIIKLLPFAAAPPEQSRMQFSSLTVNVRGSGMRILVRGNSPVFNYNKATKRLTVLGKDAGSLTEDPDEGTAGVESAVLRGFLILGKEDKRYGPALSINELSNLAKGEKANVLIGQGDVVLVMKRKRDSSILTDSQTATKRIRMAIN</sequence>
<evidence type="ECO:0000255" key="1">
    <source>
        <dbReference type="HAMAP-Rule" id="MF_04062"/>
    </source>
</evidence>
<keyword id="KW-1157">Cap snatching</keyword>
<keyword id="KW-1262">Eukaryotic host gene expression shutoff by virus</keyword>
<keyword id="KW-1191">Eukaryotic host transcription shutoff by virus</keyword>
<keyword id="KW-1190">Host gene expression shutoff by virus</keyword>
<keyword id="KW-1048">Host nucleus</keyword>
<keyword id="KW-0945">Host-virus interaction</keyword>
<keyword id="KW-1104">Inhibition of host RNA polymerase II by virus</keyword>
<keyword id="KW-0506">mRNA capping</keyword>
<keyword id="KW-0507">mRNA processing</keyword>
<keyword id="KW-1195">Viral transcription</keyword>
<keyword id="KW-0946">Virion</keyword>
<dbReference type="EMBL" id="CY005865">
    <property type="protein sequence ID" value="ABB21771.1"/>
    <property type="molecule type" value="Genomic_RNA"/>
</dbReference>
<dbReference type="SMR" id="Q20NV1"/>
<dbReference type="PRO" id="PR:Q20NV1"/>
<dbReference type="Proteomes" id="UP000008581">
    <property type="component" value="Genome"/>
</dbReference>
<dbReference type="GO" id="GO:0042025">
    <property type="term" value="C:host cell nucleus"/>
    <property type="evidence" value="ECO:0007669"/>
    <property type="project" value="UniProtKB-SubCell"/>
</dbReference>
<dbReference type="GO" id="GO:0044423">
    <property type="term" value="C:virion component"/>
    <property type="evidence" value="ECO:0007669"/>
    <property type="project" value="UniProtKB-UniRule"/>
</dbReference>
<dbReference type="GO" id="GO:0003723">
    <property type="term" value="F:RNA binding"/>
    <property type="evidence" value="ECO:0007669"/>
    <property type="project" value="UniProtKB-UniRule"/>
</dbReference>
<dbReference type="GO" id="GO:0003968">
    <property type="term" value="F:RNA-directed RNA polymerase activity"/>
    <property type="evidence" value="ECO:0007669"/>
    <property type="project" value="UniProtKB-UniRule"/>
</dbReference>
<dbReference type="GO" id="GO:0006370">
    <property type="term" value="P:7-methylguanosine mRNA capping"/>
    <property type="evidence" value="ECO:0007669"/>
    <property type="project" value="UniProtKB-UniRule"/>
</dbReference>
<dbReference type="GO" id="GO:0075526">
    <property type="term" value="P:cap snatching"/>
    <property type="evidence" value="ECO:0007669"/>
    <property type="project" value="UniProtKB-UniRule"/>
</dbReference>
<dbReference type="GO" id="GO:0006351">
    <property type="term" value="P:DNA-templated transcription"/>
    <property type="evidence" value="ECO:0007669"/>
    <property type="project" value="UniProtKB-UniRule"/>
</dbReference>
<dbReference type="GO" id="GO:0039657">
    <property type="term" value="P:symbiont-mediated suppression of host gene expression"/>
    <property type="evidence" value="ECO:0007669"/>
    <property type="project" value="UniProtKB-KW"/>
</dbReference>
<dbReference type="GO" id="GO:0039523">
    <property type="term" value="P:symbiont-mediated suppression of host mRNA transcription via inhibition of RNA polymerase II activity"/>
    <property type="evidence" value="ECO:0007669"/>
    <property type="project" value="UniProtKB-UniRule"/>
</dbReference>
<dbReference type="GO" id="GO:0039694">
    <property type="term" value="P:viral RNA genome replication"/>
    <property type="evidence" value="ECO:0007669"/>
    <property type="project" value="InterPro"/>
</dbReference>
<dbReference type="FunFam" id="3.30.30.90:FF:000001">
    <property type="entry name" value="Polymerase basic protein 2"/>
    <property type="match status" value="1"/>
</dbReference>
<dbReference type="Gene3D" id="3.30.30.90">
    <property type="entry name" value="Polymerase Basic Protein 2, C-terminal domain"/>
    <property type="match status" value="1"/>
</dbReference>
<dbReference type="HAMAP" id="MF_04062">
    <property type="entry name" value="INV_PB2"/>
    <property type="match status" value="1"/>
</dbReference>
<dbReference type="InterPro" id="IPR049110">
    <property type="entry name" value="Flu_PB2_2nd"/>
</dbReference>
<dbReference type="InterPro" id="IPR049114">
    <property type="entry name" value="Flu_PB2_6th"/>
</dbReference>
<dbReference type="InterPro" id="IPR049115">
    <property type="entry name" value="Flu_PB2_C"/>
</dbReference>
<dbReference type="InterPro" id="IPR048298">
    <property type="entry name" value="Flu_PB2_CAP-bd"/>
</dbReference>
<dbReference type="InterPro" id="IPR049111">
    <property type="entry name" value="Flu_PB2_middle"/>
</dbReference>
<dbReference type="InterPro" id="IPR049106">
    <property type="entry name" value="Flu_PB2_N"/>
</dbReference>
<dbReference type="InterPro" id="IPR001591">
    <property type="entry name" value="INV_PB2"/>
</dbReference>
<dbReference type="InterPro" id="IPR049113">
    <property type="entry name" value="PB2_helical"/>
</dbReference>
<dbReference type="InterPro" id="IPR037258">
    <property type="entry name" value="PDB2_C"/>
</dbReference>
<dbReference type="Pfam" id="PF20947">
    <property type="entry name" value="Flu_PB2_1st"/>
    <property type="match status" value="1"/>
</dbReference>
<dbReference type="Pfam" id="PF20948">
    <property type="entry name" value="Flu_PB2_2nd"/>
    <property type="match status" value="1"/>
</dbReference>
<dbReference type="Pfam" id="PF20949">
    <property type="entry name" value="Flu_PB2_3rd"/>
    <property type="match status" value="1"/>
</dbReference>
<dbReference type="Pfam" id="PF20950">
    <property type="entry name" value="Flu_PB2_4th"/>
    <property type="match status" value="1"/>
</dbReference>
<dbReference type="Pfam" id="PF00604">
    <property type="entry name" value="Flu_PB2_5th"/>
    <property type="match status" value="1"/>
</dbReference>
<dbReference type="Pfam" id="PF20951">
    <property type="entry name" value="Flu_PB2_6th"/>
    <property type="match status" value="1"/>
</dbReference>
<dbReference type="Pfam" id="PF20952">
    <property type="entry name" value="Flu_PB2_7th"/>
    <property type="match status" value="1"/>
</dbReference>
<dbReference type="SUPFAM" id="SSF160453">
    <property type="entry name" value="PB2 C-terminal domain-like"/>
    <property type="match status" value="1"/>
</dbReference>
<proteinExistence type="inferred from homology"/>
<feature type="chain" id="PRO_0000279633" description="Polymerase basic protein 2">
    <location>
        <begin position="1"/>
        <end position="759"/>
    </location>
</feature>
<feature type="short sequence motif" description="Nuclear localization signal" evidence="1">
    <location>
        <begin position="736"/>
        <end position="739"/>
    </location>
</feature>
<feature type="site" description="Avian adaptation" evidence="1">
    <location>
        <position position="627"/>
    </location>
</feature>
<gene>
    <name evidence="1" type="primary">PB2</name>
</gene>
<comment type="function">
    <text evidence="1">Plays an essential role in transcription initiation and cap-stealing mechanism, in which cellular capped pre-mRNAs are used to generate primers for viral transcription. Recognizes and binds the 7-methylguanosine-containing cap of the target pre-RNA which is subsequently cleaved after 10-13 nucleotides by the viral protein PA. Plays a role in the initiation of the viral genome replication and modulates the activity of the ribonucleoprotein (RNP) complex.</text>
</comment>
<comment type="subunit">
    <text evidence="1">Influenza RNA polymerase is composed of three subunits: PB1, PB2 and PA. Interacts (via N-terminus) with PB1 (via C-terminus). Interacts with nucleoprotein NP (via N-terminus).</text>
</comment>
<comment type="subcellular location">
    <subcellularLocation>
        <location evidence="1">Virion</location>
    </subcellularLocation>
    <subcellularLocation>
        <location evidence="1">Host nucleus</location>
    </subcellularLocation>
</comment>
<comment type="similarity">
    <text evidence="1">Belongs to the influenza viruses PB2 family.</text>
</comment>
<organism>
    <name type="scientific">Influenza A virus (strain A/Gull/Minnesota/945/1980 H13N6)</name>
    <dbReference type="NCBI Taxonomy" id="385597"/>
    <lineage>
        <taxon>Viruses</taxon>
        <taxon>Riboviria</taxon>
        <taxon>Orthornavirae</taxon>
        <taxon>Negarnaviricota</taxon>
        <taxon>Polyploviricotina</taxon>
        <taxon>Insthoviricetes</taxon>
        <taxon>Articulavirales</taxon>
        <taxon>Orthomyxoviridae</taxon>
        <taxon>Alphainfluenzavirus</taxon>
        <taxon>Alphainfluenzavirus influenzae</taxon>
        <taxon>Influenza A virus</taxon>
    </lineage>
</organism>
<name>PB2_I80AD</name>
<organismHost>
    <name type="scientific">Aves</name>
    <dbReference type="NCBI Taxonomy" id="8782"/>
</organismHost>
<reference key="1">
    <citation type="journal article" date="2006" name="Science">
        <title>Large-scale sequence analysis of avian influenza isolates.</title>
        <authorList>
            <person name="Obenauer J.C."/>
            <person name="Denson J."/>
            <person name="Mehta P.K."/>
            <person name="Su X."/>
            <person name="Mukatira S."/>
            <person name="Finkelstein D.B."/>
            <person name="Xu X."/>
            <person name="Wang J."/>
            <person name="Ma J."/>
            <person name="Fan Y."/>
            <person name="Rakestraw K.M."/>
            <person name="Webster R.G."/>
            <person name="Hoffmann E."/>
            <person name="Krauss S."/>
            <person name="Zheng J."/>
            <person name="Zhang Z."/>
            <person name="Naeve C.W."/>
        </authorList>
    </citation>
    <scope>NUCLEOTIDE SEQUENCE [GENOMIC RNA]</scope>
</reference>